<proteinExistence type="evidence at transcript level"/>
<accession>Q5R5K5</accession>
<name>AT2C1_PONAB</name>
<organism>
    <name type="scientific">Pongo abelii</name>
    <name type="common">Sumatran orangutan</name>
    <name type="synonym">Pongo pygmaeus abelii</name>
    <dbReference type="NCBI Taxonomy" id="9601"/>
    <lineage>
        <taxon>Eukaryota</taxon>
        <taxon>Metazoa</taxon>
        <taxon>Chordata</taxon>
        <taxon>Craniata</taxon>
        <taxon>Vertebrata</taxon>
        <taxon>Euteleostomi</taxon>
        <taxon>Mammalia</taxon>
        <taxon>Eutheria</taxon>
        <taxon>Euarchontoglires</taxon>
        <taxon>Primates</taxon>
        <taxon>Haplorrhini</taxon>
        <taxon>Catarrhini</taxon>
        <taxon>Hominidae</taxon>
        <taxon>Pongo</taxon>
    </lineage>
</organism>
<keyword id="KW-0067">ATP-binding</keyword>
<keyword id="KW-0106">Calcium</keyword>
<keyword id="KW-0109">Calcium transport</keyword>
<keyword id="KW-0333">Golgi apparatus</keyword>
<keyword id="KW-0406">Ion transport</keyword>
<keyword id="KW-0460">Magnesium</keyword>
<keyword id="KW-0472">Membrane</keyword>
<keyword id="KW-0479">Metal-binding</keyword>
<keyword id="KW-0547">Nucleotide-binding</keyword>
<keyword id="KW-1185">Reference proteome</keyword>
<keyword id="KW-1278">Translocase</keyword>
<keyword id="KW-0812">Transmembrane</keyword>
<keyword id="KW-1133">Transmembrane helix</keyword>
<keyword id="KW-0813">Transport</keyword>
<dbReference type="EC" id="7.2.2.10" evidence="2"/>
<dbReference type="EMBL" id="CR860853">
    <property type="protein sequence ID" value="CAH92961.1"/>
    <property type="molecule type" value="mRNA"/>
</dbReference>
<dbReference type="SMR" id="Q5R5K5"/>
<dbReference type="STRING" id="9601.ENSPPYP00000015772"/>
<dbReference type="eggNOG" id="KOG0202">
    <property type="taxonomic scope" value="Eukaryota"/>
</dbReference>
<dbReference type="HOGENOM" id="CLU_002360_3_1_1"/>
<dbReference type="InParanoid" id="Q5R5K5"/>
<dbReference type="Proteomes" id="UP000001595">
    <property type="component" value="Unplaced"/>
</dbReference>
<dbReference type="GO" id="GO:0033106">
    <property type="term" value="C:cis-Golgi network membrane"/>
    <property type="evidence" value="ECO:0000250"/>
    <property type="project" value="UniProtKB"/>
</dbReference>
<dbReference type="GO" id="GO:0005794">
    <property type="term" value="C:Golgi apparatus"/>
    <property type="evidence" value="ECO:0000250"/>
    <property type="project" value="UniProtKB"/>
</dbReference>
<dbReference type="GO" id="GO:0032580">
    <property type="term" value="C:Golgi cisterna membrane"/>
    <property type="evidence" value="ECO:0000250"/>
    <property type="project" value="UniProtKB"/>
</dbReference>
<dbReference type="GO" id="GO:0000139">
    <property type="term" value="C:Golgi membrane"/>
    <property type="evidence" value="ECO:0000250"/>
    <property type="project" value="UniProtKB"/>
</dbReference>
<dbReference type="GO" id="GO:0005802">
    <property type="term" value="C:trans-Golgi network"/>
    <property type="evidence" value="ECO:0000250"/>
    <property type="project" value="UniProtKB"/>
</dbReference>
<dbReference type="GO" id="GO:0005524">
    <property type="term" value="F:ATP binding"/>
    <property type="evidence" value="ECO:0000250"/>
    <property type="project" value="UniProtKB"/>
</dbReference>
<dbReference type="GO" id="GO:0016887">
    <property type="term" value="F:ATP hydrolysis activity"/>
    <property type="evidence" value="ECO:0007669"/>
    <property type="project" value="InterPro"/>
</dbReference>
<dbReference type="GO" id="GO:0005509">
    <property type="term" value="F:calcium ion binding"/>
    <property type="evidence" value="ECO:0000250"/>
    <property type="project" value="UniProtKB"/>
</dbReference>
<dbReference type="GO" id="GO:0030145">
    <property type="term" value="F:manganese ion binding"/>
    <property type="evidence" value="ECO:0000250"/>
    <property type="project" value="UniProtKB"/>
</dbReference>
<dbReference type="GO" id="GO:0005388">
    <property type="term" value="F:P-type calcium transporter activity"/>
    <property type="evidence" value="ECO:0000250"/>
    <property type="project" value="UniProtKB"/>
</dbReference>
<dbReference type="GO" id="GO:0140613">
    <property type="term" value="F:P-type manganese transporter activity"/>
    <property type="evidence" value="ECO:0000250"/>
    <property type="project" value="UniProtKB"/>
</dbReference>
<dbReference type="GO" id="GO:0030036">
    <property type="term" value="P:actin cytoskeleton organization"/>
    <property type="evidence" value="ECO:0000250"/>
    <property type="project" value="UniProtKB"/>
</dbReference>
<dbReference type="GO" id="GO:0006816">
    <property type="term" value="P:calcium ion transport"/>
    <property type="evidence" value="ECO:0000250"/>
    <property type="project" value="UniProtKB"/>
</dbReference>
<dbReference type="GO" id="GO:0016339">
    <property type="term" value="P:calcium-dependent cell-cell adhesion via plasma membrane cell adhesion molecules"/>
    <property type="evidence" value="ECO:0000250"/>
    <property type="project" value="UniProtKB"/>
</dbReference>
<dbReference type="GO" id="GO:0008544">
    <property type="term" value="P:epidermis development"/>
    <property type="evidence" value="ECO:0000250"/>
    <property type="project" value="UniProtKB"/>
</dbReference>
<dbReference type="GO" id="GO:0032468">
    <property type="term" value="P:Golgi calcium ion homeostasis"/>
    <property type="evidence" value="ECO:0000250"/>
    <property type="project" value="UniProtKB"/>
</dbReference>
<dbReference type="GO" id="GO:0032472">
    <property type="term" value="P:Golgi calcium ion transport"/>
    <property type="evidence" value="ECO:0000250"/>
    <property type="project" value="UniProtKB"/>
</dbReference>
<dbReference type="GO" id="GO:0006874">
    <property type="term" value="P:intracellular calcium ion homeostasis"/>
    <property type="evidence" value="ECO:0000250"/>
    <property type="project" value="UniProtKB"/>
</dbReference>
<dbReference type="GO" id="GO:0030026">
    <property type="term" value="P:intracellular manganese ion homeostasis"/>
    <property type="evidence" value="ECO:0000250"/>
    <property type="project" value="UniProtKB"/>
</dbReference>
<dbReference type="GO" id="GO:0006828">
    <property type="term" value="P:manganese ion transport"/>
    <property type="evidence" value="ECO:0000250"/>
    <property type="project" value="UniProtKB"/>
</dbReference>
<dbReference type="GO" id="GO:0043123">
    <property type="term" value="P:positive regulation of canonical NF-kappaB signal transduction"/>
    <property type="evidence" value="ECO:0000250"/>
    <property type="project" value="UniProtKB"/>
</dbReference>
<dbReference type="GO" id="GO:0042998">
    <property type="term" value="P:positive regulation of Golgi to plasma membrane protein transport"/>
    <property type="evidence" value="ECO:0000250"/>
    <property type="project" value="UniProtKB"/>
</dbReference>
<dbReference type="GO" id="GO:0098629">
    <property type="term" value="P:trans-Golgi network membrane organization"/>
    <property type="evidence" value="ECO:0000250"/>
    <property type="project" value="UniProtKB"/>
</dbReference>
<dbReference type="CDD" id="cd02085">
    <property type="entry name" value="P-type_ATPase_SPCA"/>
    <property type="match status" value="1"/>
</dbReference>
<dbReference type="FunFam" id="2.70.150.10:FF:000008">
    <property type="entry name" value="Calcium-transporting ATPase"/>
    <property type="match status" value="1"/>
</dbReference>
<dbReference type="FunFam" id="3.40.1110.10:FF:000006">
    <property type="entry name" value="Calcium-transporting ATPase"/>
    <property type="match status" value="1"/>
</dbReference>
<dbReference type="FunFam" id="3.40.50.1000:FF:000017">
    <property type="entry name" value="Calcium-transporting ATPase"/>
    <property type="match status" value="1"/>
</dbReference>
<dbReference type="FunFam" id="3.40.50.1000:FF:000001">
    <property type="entry name" value="Phospholipid-transporting ATPase IC"/>
    <property type="match status" value="1"/>
</dbReference>
<dbReference type="Gene3D" id="3.40.1110.10">
    <property type="entry name" value="Calcium-transporting ATPase, cytoplasmic domain N"/>
    <property type="match status" value="1"/>
</dbReference>
<dbReference type="Gene3D" id="2.70.150.10">
    <property type="entry name" value="Calcium-transporting ATPase, cytoplasmic transduction domain A"/>
    <property type="match status" value="1"/>
</dbReference>
<dbReference type="Gene3D" id="1.20.1110.10">
    <property type="entry name" value="Calcium-transporting ATPase, transmembrane domain"/>
    <property type="match status" value="1"/>
</dbReference>
<dbReference type="Gene3D" id="3.40.50.1000">
    <property type="entry name" value="HAD superfamily/HAD-like"/>
    <property type="match status" value="1"/>
</dbReference>
<dbReference type="InterPro" id="IPR006068">
    <property type="entry name" value="ATPase_P-typ_cation-transptr_C"/>
</dbReference>
<dbReference type="InterPro" id="IPR004014">
    <property type="entry name" value="ATPase_P-typ_cation-transptr_N"/>
</dbReference>
<dbReference type="InterPro" id="IPR023299">
    <property type="entry name" value="ATPase_P-typ_cyto_dom_N"/>
</dbReference>
<dbReference type="InterPro" id="IPR018303">
    <property type="entry name" value="ATPase_P-typ_P_site"/>
</dbReference>
<dbReference type="InterPro" id="IPR023298">
    <property type="entry name" value="ATPase_P-typ_TM_dom_sf"/>
</dbReference>
<dbReference type="InterPro" id="IPR008250">
    <property type="entry name" value="ATPase_P-typ_transduc_dom_A_sf"/>
</dbReference>
<dbReference type="InterPro" id="IPR036412">
    <property type="entry name" value="HAD-like_sf"/>
</dbReference>
<dbReference type="InterPro" id="IPR023214">
    <property type="entry name" value="HAD_sf"/>
</dbReference>
<dbReference type="InterPro" id="IPR006413">
    <property type="entry name" value="P-type_ATPase_IIA_PMR1"/>
</dbReference>
<dbReference type="InterPro" id="IPR001757">
    <property type="entry name" value="P_typ_ATPase"/>
</dbReference>
<dbReference type="InterPro" id="IPR044492">
    <property type="entry name" value="P_typ_ATPase_HD_dom"/>
</dbReference>
<dbReference type="NCBIfam" id="TIGR01522">
    <property type="entry name" value="ATPase-IIA2_Ca"/>
    <property type="match status" value="1"/>
</dbReference>
<dbReference type="NCBIfam" id="TIGR01494">
    <property type="entry name" value="ATPase_P-type"/>
    <property type="match status" value="3"/>
</dbReference>
<dbReference type="PANTHER" id="PTHR42861">
    <property type="entry name" value="CALCIUM-TRANSPORTING ATPASE"/>
    <property type="match status" value="1"/>
</dbReference>
<dbReference type="Pfam" id="PF13246">
    <property type="entry name" value="Cation_ATPase"/>
    <property type="match status" value="1"/>
</dbReference>
<dbReference type="Pfam" id="PF00689">
    <property type="entry name" value="Cation_ATPase_C"/>
    <property type="match status" value="1"/>
</dbReference>
<dbReference type="Pfam" id="PF00690">
    <property type="entry name" value="Cation_ATPase_N"/>
    <property type="match status" value="1"/>
</dbReference>
<dbReference type="Pfam" id="PF00122">
    <property type="entry name" value="E1-E2_ATPase"/>
    <property type="match status" value="1"/>
</dbReference>
<dbReference type="PRINTS" id="PR00119">
    <property type="entry name" value="CATATPASE"/>
</dbReference>
<dbReference type="PRINTS" id="PR00120">
    <property type="entry name" value="HATPASE"/>
</dbReference>
<dbReference type="SFLD" id="SFLDG00002">
    <property type="entry name" value="C1.7:_P-type_atpase_like"/>
    <property type="match status" value="1"/>
</dbReference>
<dbReference type="SFLD" id="SFLDF00027">
    <property type="entry name" value="p-type_atpase"/>
    <property type="match status" value="1"/>
</dbReference>
<dbReference type="SMART" id="SM00831">
    <property type="entry name" value="Cation_ATPase_N"/>
    <property type="match status" value="1"/>
</dbReference>
<dbReference type="SUPFAM" id="SSF81653">
    <property type="entry name" value="Calcium ATPase, transduction domain A"/>
    <property type="match status" value="1"/>
</dbReference>
<dbReference type="SUPFAM" id="SSF81665">
    <property type="entry name" value="Calcium ATPase, transmembrane domain M"/>
    <property type="match status" value="1"/>
</dbReference>
<dbReference type="SUPFAM" id="SSF56784">
    <property type="entry name" value="HAD-like"/>
    <property type="match status" value="1"/>
</dbReference>
<dbReference type="PROSITE" id="PS00154">
    <property type="entry name" value="ATPASE_E1_E2"/>
    <property type="match status" value="1"/>
</dbReference>
<gene>
    <name type="primary">ATP2C1</name>
</gene>
<protein>
    <recommendedName>
        <fullName>Calcium-transporting ATPase type 2C member 1</fullName>
        <shortName>ATPase 2C1</shortName>
        <ecNumber evidence="2">7.2.2.10</ecNumber>
    </recommendedName>
    <alternativeName>
        <fullName>ATP-dependent Ca(2+) pump PMR1</fullName>
    </alternativeName>
    <alternativeName>
        <fullName evidence="2">Ca(2+)/Mn(2+)-ATPase 2C1</fullName>
    </alternativeName>
    <alternativeName>
        <fullName>Secretory pathway Ca(2+)-transporting ATPase type 1</fullName>
        <shortName evidence="2">SPCA1</shortName>
    </alternativeName>
</protein>
<reference key="1">
    <citation type="submission" date="2004-11" db="EMBL/GenBank/DDBJ databases">
        <authorList>
            <consortium name="The German cDNA consortium"/>
        </authorList>
    </citation>
    <scope>NUCLEOTIDE SEQUENCE [LARGE SCALE MRNA]</scope>
    <source>
        <tissue>Kidney</tissue>
    </source>
</reference>
<comment type="function">
    <text evidence="2 3">ATP-driven pump that supplies the Golgi apparatus with Ca(2+) and Mn(2+) ions, both essential cofactors for processing and trafficking of newly synthesized proteins in the secretory pathway (By similarity). Within a catalytic cycle, acquires Ca(2+) or Mn(2+) ions on the cytoplasmic side of the membrane and delivers them to the lumenal side. The transfer of ions across the membrane is coupled to ATP hydrolysis and is associated with a transient phosphorylation that shifts the pump conformation from inward-facing to outward-facing state (By similarity). Plays a primary role in the maintenance of Ca(2+) homeostasis in the trans-Golgi compartment with a functional impact on Golgi and post-Golgi protein sorting as well as a structural impact on cisternae morphology. Responsible for loading the Golgi stores with Ca(2+) ions in keratinocytes, contributing to keratinocyte differentiation and epidermis integrity (By similarity). Participates in Ca(2+) and Mn(2+) ions uptake into the Golgi store of hippocampal neurons and regulates protein trafficking required for neural polarity (By similarity). May also play a role in the maintenance of Ca(2+) and Mn(2+) homeostasis and signaling in the cytosol while preventing cytotoxicity (By similarity).</text>
</comment>
<comment type="catalytic activity">
    <reaction evidence="2">
        <text>Ca(2+)(in) + ATP + H2O = Ca(2+)(out) + ADP + phosphate + H(+)</text>
        <dbReference type="Rhea" id="RHEA:18105"/>
        <dbReference type="ChEBI" id="CHEBI:15377"/>
        <dbReference type="ChEBI" id="CHEBI:15378"/>
        <dbReference type="ChEBI" id="CHEBI:29108"/>
        <dbReference type="ChEBI" id="CHEBI:30616"/>
        <dbReference type="ChEBI" id="CHEBI:43474"/>
        <dbReference type="ChEBI" id="CHEBI:456216"/>
        <dbReference type="EC" id="7.2.2.10"/>
    </reaction>
    <physiologicalReaction direction="left-to-right" evidence="2">
        <dbReference type="Rhea" id="RHEA:18106"/>
    </physiologicalReaction>
</comment>
<comment type="catalytic activity">
    <reaction evidence="2">
        <text>Mn(2+)(in) + ATP + H2O = Mn(2+)(out) + ADP + phosphate + H(+)</text>
        <dbReference type="Rhea" id="RHEA:66820"/>
        <dbReference type="ChEBI" id="CHEBI:15377"/>
        <dbReference type="ChEBI" id="CHEBI:15378"/>
        <dbReference type="ChEBI" id="CHEBI:29035"/>
        <dbReference type="ChEBI" id="CHEBI:30616"/>
        <dbReference type="ChEBI" id="CHEBI:43474"/>
        <dbReference type="ChEBI" id="CHEBI:456216"/>
    </reaction>
    <physiologicalReaction direction="left-to-right" evidence="2">
        <dbReference type="Rhea" id="RHEA:66821"/>
    </physiologicalReaction>
</comment>
<comment type="subunit">
    <text evidence="2">Monomer. Homodimer.</text>
</comment>
<comment type="subcellular location">
    <subcellularLocation>
        <location evidence="2">Golgi apparatus</location>
        <location evidence="2">trans-Golgi network membrane</location>
        <topology evidence="4">Multi-pass membrane protein</topology>
    </subcellularLocation>
    <subcellularLocation>
        <location evidence="2">Golgi apparatus</location>
        <location evidence="2">Golgi stack membrane</location>
        <topology evidence="4">Multi-pass membrane protein</topology>
    </subcellularLocation>
    <text evidence="3">During neuron differentiation, shifts from juxtanuclear Golgi position to multiple Golgi structures distributed over the neural soma with a predominance in the apical dendritic trunk.</text>
</comment>
<comment type="similarity">
    <text evidence="5">Belongs to the cation transport ATPase (P-type) (TC 3.A.3) family. Type IIA subfamily.</text>
</comment>
<feature type="chain" id="PRO_0000326150" description="Calcium-transporting ATPase type 2C member 1">
    <location>
        <begin position="1"/>
        <end position="918"/>
    </location>
</feature>
<feature type="topological domain" description="Cytoplasmic" evidence="4">
    <location>
        <begin position="1"/>
        <end position="75"/>
    </location>
</feature>
<feature type="transmembrane region" description="Helical" evidence="4">
    <location>
        <begin position="76"/>
        <end position="96"/>
    </location>
</feature>
<feature type="topological domain" description="Extracellular" evidence="4">
    <location>
        <begin position="97"/>
        <end position="98"/>
    </location>
</feature>
<feature type="transmembrane region" description="Helical" evidence="4">
    <location>
        <begin position="99"/>
        <end position="119"/>
    </location>
</feature>
<feature type="topological domain" description="Cytoplasmic" evidence="4">
    <location>
        <begin position="120"/>
        <end position="267"/>
    </location>
</feature>
<feature type="transmembrane region" description="Helical" evidence="4">
    <location>
        <begin position="268"/>
        <end position="288"/>
    </location>
</feature>
<feature type="topological domain" description="Extracellular" evidence="4">
    <location>
        <begin position="289"/>
        <end position="302"/>
    </location>
</feature>
<feature type="transmembrane region" description="Helical" evidence="4">
    <location>
        <begin position="303"/>
        <end position="323"/>
    </location>
</feature>
<feature type="topological domain" description="Cytoplasmic" evidence="4">
    <location>
        <begin position="324"/>
        <end position="703"/>
    </location>
</feature>
<feature type="transmembrane region" description="Helical" evidence="4">
    <location>
        <begin position="704"/>
        <end position="724"/>
    </location>
</feature>
<feature type="topological domain" description="Extracellular" evidence="4">
    <location>
        <begin position="725"/>
        <end position="732"/>
    </location>
</feature>
<feature type="transmembrane region" description="Helical" evidence="4">
    <location>
        <begin position="733"/>
        <end position="753"/>
    </location>
</feature>
<feature type="topological domain" description="Cytoplasmic" evidence="4">
    <location>
        <begin position="754"/>
        <end position="773"/>
    </location>
</feature>
<feature type="transmembrane region" description="Helical" evidence="4">
    <location>
        <begin position="774"/>
        <end position="794"/>
    </location>
</feature>
<feature type="topological domain" description="Extracellular" evidence="4">
    <location>
        <begin position="795"/>
        <end position="842"/>
    </location>
</feature>
<feature type="transmembrane region" description="Helical" evidence="4">
    <location>
        <begin position="843"/>
        <end position="863"/>
    </location>
</feature>
<feature type="topological domain" description="Cytoplasmic" evidence="4">
    <location>
        <begin position="864"/>
        <end position="873"/>
    </location>
</feature>
<feature type="transmembrane region" description="Helical" evidence="4">
    <location>
        <begin position="874"/>
        <end position="894"/>
    </location>
</feature>
<feature type="topological domain" description="Extracellular" evidence="4">
    <location>
        <begin position="895"/>
        <end position="918"/>
    </location>
</feature>
<feature type="active site" description="4-aspartylphosphate intermediate" evidence="1">
    <location>
        <position position="350"/>
    </location>
</feature>
<feature type="binding site" evidence="1">
    <location>
        <position position="643"/>
    </location>
    <ligand>
        <name>Mg(2+)</name>
        <dbReference type="ChEBI" id="CHEBI:18420"/>
    </ligand>
</feature>
<feature type="binding site" evidence="1">
    <location>
        <position position="647"/>
    </location>
    <ligand>
        <name>Mg(2+)</name>
        <dbReference type="ChEBI" id="CHEBI:18420"/>
    </ligand>
</feature>
<sequence>MKVARFQKIPNGENETMIPVLTSKKASELPVSEVASILQADLQNGLNKCEVSHRRAFHGWNEFDISEDEPLWKKYISQFKNPLIMLLLASAVISVLMHQFDDAVSITVAILIVVTVAFVQEYRSEKSLEELSKLVPPECHCVREGKLEHTLARDLVPGDTVCLSVGDRVPADLRLFEAVDLSIDESSLTGETTPCSKVTAPQPAATNGDLASRSNIAFMGTLVRCGKAKGVVIGTGENSEFGEVFKMMQAEEAPKTPLQKSMDLLGKQLSFYSFGIIGIIMLVGWLLGKDILEMFTISVSLAVAAIPEGLPIVVTVTLALGVMRMVKKRAIVKKLPIVETLGCCNVICSDKTGTLTKNEMTVTHIFTSDGLHAEVTGVGYNQFGEVIVDGDVVHGFYNPAVSRIVEAGCVCNDAVIRNNTLMGKPTEGALIALAMKMGLDGLQQDYIRKAEYPFSSEQKWMAVKCVHRTQQDRPEICFMKGAYEQVIKYCTTYQSKGQTLTLTQQQRDVQQEKARMGSAGLRVLALASGPELGQLTFLGLVGIIDPPRTGVKEAVTTLIASGVSIKMITGDSQETAIAIASRLGLYSKTSQSVSGEEIDAMDVQQLSQIVPKVAVFYRASPRHKMKIIKSLQKNGSVVAMTGDGVNDAVALKAADIGVAMGQTGTDVCKEAADMILVDDDFQTIMSAIEEGKGIYNNIKNFVRFQLSTSIAALTLISLATLMNFPNPLNAMQILWINIIMDGPPAQSLGVEPVDKDVIRKPPRNWKDSILTKNLILKILVSSIIIVCGTLFVFWRELRDNVITPRDTTMTFTCFVFFDMFNALSSRSQTKSVFEIGLCSNKMFCYAVLGSIMGQLLVIYFPPLQKVFQTESLSILDLLFLLGLTSSVCIVAEIIKKVERSREKIQKHVSSTSSSFLEV</sequence>
<evidence type="ECO:0000250" key="1"/>
<evidence type="ECO:0000250" key="2">
    <source>
        <dbReference type="UniProtKB" id="P98194"/>
    </source>
</evidence>
<evidence type="ECO:0000250" key="3">
    <source>
        <dbReference type="UniProtKB" id="Q80XR2"/>
    </source>
</evidence>
<evidence type="ECO:0000255" key="4"/>
<evidence type="ECO:0000305" key="5"/>